<evidence type="ECO:0000250" key="1">
    <source>
        <dbReference type="UniProtKB" id="O47881"/>
    </source>
</evidence>
<evidence type="ECO:0000255" key="2"/>
<evidence type="ECO:0000255" key="3">
    <source>
        <dbReference type="PROSITE-ProRule" id="PRU00718"/>
    </source>
</evidence>
<evidence type="ECO:0000256" key="4">
    <source>
        <dbReference type="SAM" id="MobiDB-lite"/>
    </source>
</evidence>
<evidence type="ECO:0000269" key="5">
    <source>
    </source>
</evidence>
<evidence type="ECO:0000269" key="6">
    <source>
    </source>
</evidence>
<evidence type="ECO:0000269" key="7">
    <source>
    </source>
</evidence>
<evidence type="ECO:0000303" key="8">
    <source>
    </source>
</evidence>
<evidence type="ECO:0000305" key="9"/>
<evidence type="ECO:0000312" key="10">
    <source>
        <dbReference type="Araport" id="AT3G47930"/>
    </source>
</evidence>
<evidence type="ECO:0000312" key="11">
    <source>
        <dbReference type="EMBL" id="CAB41146.1"/>
    </source>
</evidence>
<protein>
    <recommendedName>
        <fullName evidence="8">L-galactono-1,4-lactone dehydrogenase, mitochondrial</fullName>
        <ecNumber evidence="5">1.3.2.3</ecNumber>
    </recommendedName>
</protein>
<gene>
    <name evidence="8" type="primary">GLDH</name>
    <name evidence="10" type="ordered locus">At3g47930</name>
    <name evidence="11" type="ORF">T17F15.200</name>
</gene>
<sequence length="610" mass="68555">MLRSLLLRRSVGHSLGTLSPSSSTIRSSFSPHRTLCTTGQTLTPPPPPPPRPPPPPPATASEAQFRKYAGYAALAIFSGVATYFSFPFPENAKHKKAQIFRYAPLPEDLHTVSNWSGTHEVQTRNFNQPENLADLEALVKESHEKKLRIRPVGSGLSPNGIGLSRSGMVNLALMDKVLEVDKEKKRVTVQAGIRVQQLVDAIKDYGLTLQNFASIREQQIGGIIQVGAHGTGARLPPIDEQVISMKLVTPAKGTIELSREKDPELFHLARCGLGGLGVVAEVTLQCVARHELVEHTYVSNLQEIKKNHKKLLSANKHVKYLYIPYTDTVVVVTCNPVSKWSGPPKDKPKYTTDEAVQHVRDLYRESIVKYRVQDSGKKSPDSSEPDIQELSFTELRDKLLALDPLNDVHVAKVNQAEAEFWKKSEGYRVGWSDEILGFDCGGQQWVSESCFPAGTLANPSMKDLEYIEELKKLIEKEAIPAPAPIEQRWTARSKSPISPAFSTSEDDIFSWVGIIMYLPTADPRQRKDITDEFFHYRHLTQKQLWDQFSAYEHWAKIEIPKDKEELEALQARIRKRFPVDAYNKARRELDPNRILSNNMVEKLFPVSTTA</sequence>
<dbReference type="EC" id="1.3.2.3" evidence="5"/>
<dbReference type="EMBL" id="AB042279">
    <property type="protein sequence ID" value="BAA95212.1"/>
    <property type="molecule type" value="mRNA"/>
</dbReference>
<dbReference type="EMBL" id="AL049658">
    <property type="protein sequence ID" value="CAB41146.1"/>
    <property type="molecule type" value="Genomic_DNA"/>
</dbReference>
<dbReference type="EMBL" id="CP002686">
    <property type="protein sequence ID" value="AEE78347.1"/>
    <property type="molecule type" value="Genomic_DNA"/>
</dbReference>
<dbReference type="EMBL" id="BT005925">
    <property type="protein sequence ID" value="AAO64860.1"/>
    <property type="molecule type" value="mRNA"/>
</dbReference>
<dbReference type="EMBL" id="AK117924">
    <property type="protein sequence ID" value="BAC42562.1"/>
    <property type="molecule type" value="mRNA"/>
</dbReference>
<dbReference type="PIR" id="T06690">
    <property type="entry name" value="T06690"/>
</dbReference>
<dbReference type="RefSeq" id="NP_190376.1">
    <molecule id="Q9SU56-1"/>
    <property type="nucleotide sequence ID" value="NM_114662.3"/>
</dbReference>
<dbReference type="PDB" id="7A24">
    <property type="method" value="EM"/>
    <property type="resolution" value="3.80 A"/>
    <property type="chains" value="z=1-610"/>
</dbReference>
<dbReference type="PDBsum" id="7A24"/>
<dbReference type="SMR" id="Q9SU56"/>
<dbReference type="BioGRID" id="9268">
    <property type="interactions" value="2"/>
</dbReference>
<dbReference type="FunCoup" id="Q9SU56">
    <property type="interactions" value="1194"/>
</dbReference>
<dbReference type="IntAct" id="Q9SU56">
    <property type="interactions" value="2"/>
</dbReference>
<dbReference type="STRING" id="3702.Q9SU56"/>
<dbReference type="PaxDb" id="3702-AT3G47930.1"/>
<dbReference type="ProteomicsDB" id="230466">
    <molecule id="Q9SU56-1"/>
</dbReference>
<dbReference type="EnsemblPlants" id="AT3G47930.1">
    <molecule id="Q9SU56-1"/>
    <property type="protein sequence ID" value="AT3G47930.1"/>
    <property type="gene ID" value="AT3G47930"/>
</dbReference>
<dbReference type="GeneID" id="823948"/>
<dbReference type="Gramene" id="AT3G47930.1">
    <molecule id="Q9SU56-1"/>
    <property type="protein sequence ID" value="AT3G47930.1"/>
    <property type="gene ID" value="AT3G47930"/>
</dbReference>
<dbReference type="KEGG" id="ath:AT3G47930"/>
<dbReference type="Araport" id="AT3G47930"/>
<dbReference type="TAIR" id="AT3G47930">
    <property type="gene designation" value="GLDH"/>
</dbReference>
<dbReference type="eggNOG" id="KOG4730">
    <property type="taxonomic scope" value="Eukaryota"/>
</dbReference>
<dbReference type="HOGENOM" id="CLU_021072_0_0_1"/>
<dbReference type="InParanoid" id="Q9SU56"/>
<dbReference type="OMA" id="KQWANEW"/>
<dbReference type="OrthoDB" id="610608at2759"/>
<dbReference type="PhylomeDB" id="Q9SU56"/>
<dbReference type="BioCyc" id="ARA:AT3G47930-MONOMER"/>
<dbReference type="BRENDA" id="1.3.2.3">
    <property type="organism ID" value="399"/>
</dbReference>
<dbReference type="SABIO-RK" id="Q9SU56"/>
<dbReference type="UniPathway" id="UPA00132"/>
<dbReference type="CD-CODE" id="4299E36E">
    <property type="entry name" value="Nucleolus"/>
</dbReference>
<dbReference type="PRO" id="PR:Q9SU56"/>
<dbReference type="Proteomes" id="UP000006548">
    <property type="component" value="Chromosome 3"/>
</dbReference>
<dbReference type="ExpressionAtlas" id="Q9SU56">
    <property type="expression patterns" value="baseline and differential"/>
</dbReference>
<dbReference type="GO" id="GO:0031966">
    <property type="term" value="C:mitochondrial membrane"/>
    <property type="evidence" value="ECO:0007669"/>
    <property type="project" value="UniProtKB-SubCell"/>
</dbReference>
<dbReference type="GO" id="GO:0005739">
    <property type="term" value="C:mitochondrion"/>
    <property type="evidence" value="ECO:0000314"/>
    <property type="project" value="TAIR"/>
</dbReference>
<dbReference type="GO" id="GO:0003885">
    <property type="term" value="F:D-arabinono-1,4-lactone oxidase activity"/>
    <property type="evidence" value="ECO:0007669"/>
    <property type="project" value="InterPro"/>
</dbReference>
<dbReference type="GO" id="GO:0071949">
    <property type="term" value="F:FAD binding"/>
    <property type="evidence" value="ECO:0007669"/>
    <property type="project" value="InterPro"/>
</dbReference>
<dbReference type="GO" id="GO:0016633">
    <property type="term" value="F:galactonolactone dehydrogenase activity"/>
    <property type="evidence" value="ECO:0000314"/>
    <property type="project" value="TAIR"/>
</dbReference>
<dbReference type="GO" id="GO:0080049">
    <property type="term" value="F:L-gulono-1,4-lactone dehydrogenase activity"/>
    <property type="evidence" value="ECO:0000314"/>
    <property type="project" value="TAIR"/>
</dbReference>
<dbReference type="GO" id="GO:0019853">
    <property type="term" value="P:L-ascorbic acid biosynthetic process"/>
    <property type="evidence" value="ECO:0000314"/>
    <property type="project" value="TAIR"/>
</dbReference>
<dbReference type="Gene3D" id="3.30.465.10">
    <property type="match status" value="1"/>
</dbReference>
<dbReference type="Gene3D" id="3.30.43.10">
    <property type="entry name" value="Uridine Diphospho-n-acetylenolpyruvylglucosamine Reductase, domain 2"/>
    <property type="match status" value="1"/>
</dbReference>
<dbReference type="InterPro" id="IPR007173">
    <property type="entry name" value="ALO_C"/>
</dbReference>
<dbReference type="InterPro" id="IPR016166">
    <property type="entry name" value="FAD-bd_PCMH"/>
</dbReference>
<dbReference type="InterPro" id="IPR036318">
    <property type="entry name" value="FAD-bd_PCMH-like_sf"/>
</dbReference>
<dbReference type="InterPro" id="IPR016167">
    <property type="entry name" value="FAD-bd_PCMH_sub1"/>
</dbReference>
<dbReference type="InterPro" id="IPR016169">
    <property type="entry name" value="FAD-bd_PCMH_sub2"/>
</dbReference>
<dbReference type="InterPro" id="IPR010031">
    <property type="entry name" value="FAD_lactone_oxidase-like"/>
</dbReference>
<dbReference type="InterPro" id="IPR010029">
    <property type="entry name" value="GL_DH"/>
</dbReference>
<dbReference type="InterPro" id="IPR006094">
    <property type="entry name" value="Oxid_FAD_bind_N"/>
</dbReference>
<dbReference type="NCBIfam" id="TIGR01676">
    <property type="entry name" value="GLDHase"/>
    <property type="match status" value="1"/>
</dbReference>
<dbReference type="PANTHER" id="PTHR43762:SF1">
    <property type="entry name" value="D-ARABINONO-1,4-LACTONE OXIDASE"/>
    <property type="match status" value="1"/>
</dbReference>
<dbReference type="PANTHER" id="PTHR43762">
    <property type="entry name" value="L-GULONOLACTONE OXIDASE"/>
    <property type="match status" value="1"/>
</dbReference>
<dbReference type="Pfam" id="PF04030">
    <property type="entry name" value="ALO"/>
    <property type="match status" value="1"/>
</dbReference>
<dbReference type="Pfam" id="PF01565">
    <property type="entry name" value="FAD_binding_4"/>
    <property type="match status" value="1"/>
</dbReference>
<dbReference type="PIRSF" id="PIRSF000136">
    <property type="entry name" value="LGO_GLO"/>
    <property type="match status" value="1"/>
</dbReference>
<dbReference type="SUPFAM" id="SSF56176">
    <property type="entry name" value="FAD-binding/transporter-associated domain-like"/>
    <property type="match status" value="1"/>
</dbReference>
<dbReference type="SUPFAM" id="SSF101447">
    <property type="entry name" value="Formin homology 2 domain (FH2 domain)"/>
    <property type="match status" value="1"/>
</dbReference>
<dbReference type="PROSITE" id="PS51387">
    <property type="entry name" value="FAD_PCMH"/>
    <property type="match status" value="1"/>
</dbReference>
<organism>
    <name type="scientific">Arabidopsis thaliana</name>
    <name type="common">Mouse-ear cress</name>
    <dbReference type="NCBI Taxonomy" id="3702"/>
    <lineage>
        <taxon>Eukaryota</taxon>
        <taxon>Viridiplantae</taxon>
        <taxon>Streptophyta</taxon>
        <taxon>Embryophyta</taxon>
        <taxon>Tracheophyta</taxon>
        <taxon>Spermatophyta</taxon>
        <taxon>Magnoliopsida</taxon>
        <taxon>eudicotyledons</taxon>
        <taxon>Gunneridae</taxon>
        <taxon>Pentapetalae</taxon>
        <taxon>rosids</taxon>
        <taxon>malvids</taxon>
        <taxon>Brassicales</taxon>
        <taxon>Brassicaceae</taxon>
        <taxon>Camelineae</taxon>
        <taxon>Arabidopsis</taxon>
    </lineage>
</organism>
<name>GLDH_ARATH</name>
<reference key="1">
    <citation type="submission" date="2000-04" db="EMBL/GenBank/DDBJ databases">
        <title>Studies on gene expression of an Arabidopsis gene, involved in the biosynthesis of ascorbic acid, under environmental stress.</title>
        <authorList>
            <person name="Tamaoki M."/>
        </authorList>
    </citation>
    <scope>NUCLEOTIDE SEQUENCE [MRNA] (ISOFORM 1)</scope>
    <source>
        <strain>cv. Columbia</strain>
        <tissue>Seedling</tissue>
    </source>
</reference>
<reference key="2">
    <citation type="journal article" date="2000" name="Nature">
        <title>Sequence and analysis of chromosome 3 of the plant Arabidopsis thaliana.</title>
        <authorList>
            <person name="Salanoubat M."/>
            <person name="Lemcke K."/>
            <person name="Rieger M."/>
            <person name="Ansorge W."/>
            <person name="Unseld M."/>
            <person name="Fartmann B."/>
            <person name="Valle G."/>
            <person name="Bloecker H."/>
            <person name="Perez-Alonso M."/>
            <person name="Obermaier B."/>
            <person name="Delseny M."/>
            <person name="Boutry M."/>
            <person name="Grivell L.A."/>
            <person name="Mache R."/>
            <person name="Puigdomenech P."/>
            <person name="De Simone V."/>
            <person name="Choisne N."/>
            <person name="Artiguenave F."/>
            <person name="Robert C."/>
            <person name="Brottier P."/>
            <person name="Wincker P."/>
            <person name="Cattolico L."/>
            <person name="Weissenbach J."/>
            <person name="Saurin W."/>
            <person name="Quetier F."/>
            <person name="Schaefer M."/>
            <person name="Mueller-Auer S."/>
            <person name="Gabel C."/>
            <person name="Fuchs M."/>
            <person name="Benes V."/>
            <person name="Wurmbach E."/>
            <person name="Drzonek H."/>
            <person name="Erfle H."/>
            <person name="Jordan N."/>
            <person name="Bangert S."/>
            <person name="Wiedelmann R."/>
            <person name="Kranz H."/>
            <person name="Voss H."/>
            <person name="Holland R."/>
            <person name="Brandt P."/>
            <person name="Nyakatura G."/>
            <person name="Vezzi A."/>
            <person name="D'Angelo M."/>
            <person name="Pallavicini A."/>
            <person name="Toppo S."/>
            <person name="Simionati B."/>
            <person name="Conrad A."/>
            <person name="Hornischer K."/>
            <person name="Kauer G."/>
            <person name="Loehnert T.-H."/>
            <person name="Nordsiek G."/>
            <person name="Reichelt J."/>
            <person name="Scharfe M."/>
            <person name="Schoen O."/>
            <person name="Bargues M."/>
            <person name="Terol J."/>
            <person name="Climent J."/>
            <person name="Navarro P."/>
            <person name="Collado C."/>
            <person name="Perez-Perez A."/>
            <person name="Ottenwaelder B."/>
            <person name="Duchemin D."/>
            <person name="Cooke R."/>
            <person name="Laudie M."/>
            <person name="Berger-Llauro C."/>
            <person name="Purnelle B."/>
            <person name="Masuy D."/>
            <person name="de Haan M."/>
            <person name="Maarse A.C."/>
            <person name="Alcaraz J.-P."/>
            <person name="Cottet A."/>
            <person name="Casacuberta E."/>
            <person name="Monfort A."/>
            <person name="Argiriou A."/>
            <person name="Flores M."/>
            <person name="Liguori R."/>
            <person name="Vitale D."/>
            <person name="Mannhaupt G."/>
            <person name="Haase D."/>
            <person name="Schoof H."/>
            <person name="Rudd S."/>
            <person name="Zaccaria P."/>
            <person name="Mewes H.-W."/>
            <person name="Mayer K.F.X."/>
            <person name="Kaul S."/>
            <person name="Town C.D."/>
            <person name="Koo H.L."/>
            <person name="Tallon L.J."/>
            <person name="Jenkins J."/>
            <person name="Rooney T."/>
            <person name="Rizzo M."/>
            <person name="Walts A."/>
            <person name="Utterback T."/>
            <person name="Fujii C.Y."/>
            <person name="Shea T.P."/>
            <person name="Creasy T.H."/>
            <person name="Haas B."/>
            <person name="Maiti R."/>
            <person name="Wu D."/>
            <person name="Peterson J."/>
            <person name="Van Aken S."/>
            <person name="Pai G."/>
            <person name="Militscher J."/>
            <person name="Sellers P."/>
            <person name="Gill J.E."/>
            <person name="Feldblyum T.V."/>
            <person name="Preuss D."/>
            <person name="Lin X."/>
            <person name="Nierman W.C."/>
            <person name="Salzberg S.L."/>
            <person name="White O."/>
            <person name="Venter J.C."/>
            <person name="Fraser C.M."/>
            <person name="Kaneko T."/>
            <person name="Nakamura Y."/>
            <person name="Sato S."/>
            <person name="Kato T."/>
            <person name="Asamizu E."/>
            <person name="Sasamoto S."/>
            <person name="Kimura T."/>
            <person name="Idesawa K."/>
            <person name="Kawashima K."/>
            <person name="Kishida Y."/>
            <person name="Kiyokawa C."/>
            <person name="Kohara M."/>
            <person name="Matsumoto M."/>
            <person name="Matsuno A."/>
            <person name="Muraki A."/>
            <person name="Nakayama S."/>
            <person name="Nakazaki N."/>
            <person name="Shinpo S."/>
            <person name="Takeuchi C."/>
            <person name="Wada T."/>
            <person name="Watanabe A."/>
            <person name="Yamada M."/>
            <person name="Yasuda M."/>
            <person name="Tabata S."/>
        </authorList>
    </citation>
    <scope>NUCLEOTIDE SEQUENCE [LARGE SCALE GENOMIC DNA]</scope>
    <source>
        <strain>cv. Columbia</strain>
    </source>
</reference>
<reference key="3">
    <citation type="journal article" date="2017" name="Plant J.">
        <title>Araport11: a complete reannotation of the Arabidopsis thaliana reference genome.</title>
        <authorList>
            <person name="Cheng C.Y."/>
            <person name="Krishnakumar V."/>
            <person name="Chan A.P."/>
            <person name="Thibaud-Nissen F."/>
            <person name="Schobel S."/>
            <person name="Town C.D."/>
        </authorList>
    </citation>
    <scope>GENOME REANNOTATION</scope>
    <source>
        <strain>cv. Columbia</strain>
    </source>
</reference>
<reference key="4">
    <citation type="journal article" date="2003" name="Science">
        <title>Empirical analysis of transcriptional activity in the Arabidopsis genome.</title>
        <authorList>
            <person name="Yamada K."/>
            <person name="Lim J."/>
            <person name="Dale J.M."/>
            <person name="Chen H."/>
            <person name="Shinn P."/>
            <person name="Palm C.J."/>
            <person name="Southwick A.M."/>
            <person name="Wu H.C."/>
            <person name="Kim C.J."/>
            <person name="Nguyen M."/>
            <person name="Pham P.K."/>
            <person name="Cheuk R.F."/>
            <person name="Karlin-Newmann G."/>
            <person name="Liu S.X."/>
            <person name="Lam B."/>
            <person name="Sakano H."/>
            <person name="Wu T."/>
            <person name="Yu G."/>
            <person name="Miranda M."/>
            <person name="Quach H.L."/>
            <person name="Tripp M."/>
            <person name="Chang C.H."/>
            <person name="Lee J.M."/>
            <person name="Toriumi M.J."/>
            <person name="Chan M.M."/>
            <person name="Tang C.C."/>
            <person name="Onodera C.S."/>
            <person name="Deng J.M."/>
            <person name="Akiyama K."/>
            <person name="Ansari Y."/>
            <person name="Arakawa T."/>
            <person name="Banh J."/>
            <person name="Banno F."/>
            <person name="Bowser L."/>
            <person name="Brooks S.Y."/>
            <person name="Carninci P."/>
            <person name="Chao Q."/>
            <person name="Choy N."/>
            <person name="Enju A."/>
            <person name="Goldsmith A.D."/>
            <person name="Gurjal M."/>
            <person name="Hansen N.F."/>
            <person name="Hayashizaki Y."/>
            <person name="Johnson-Hopson C."/>
            <person name="Hsuan V.W."/>
            <person name="Iida K."/>
            <person name="Karnes M."/>
            <person name="Khan S."/>
            <person name="Koesema E."/>
            <person name="Ishida J."/>
            <person name="Jiang P.X."/>
            <person name="Jones T."/>
            <person name="Kawai J."/>
            <person name="Kamiya A."/>
            <person name="Meyers C."/>
            <person name="Nakajima M."/>
            <person name="Narusaka M."/>
            <person name="Seki M."/>
            <person name="Sakurai T."/>
            <person name="Satou M."/>
            <person name="Tamse R."/>
            <person name="Vaysberg M."/>
            <person name="Wallender E.K."/>
            <person name="Wong C."/>
            <person name="Yamamura Y."/>
            <person name="Yuan S."/>
            <person name="Shinozaki K."/>
            <person name="Davis R.W."/>
            <person name="Theologis A."/>
            <person name="Ecker J.R."/>
        </authorList>
    </citation>
    <scope>NUCLEOTIDE SEQUENCE [LARGE SCALE MRNA] (ISOFORM 1)</scope>
    <source>
        <strain>cv. Columbia</strain>
    </source>
</reference>
<reference key="5">
    <citation type="journal article" date="2002" name="Science">
        <title>Functional annotation of a full-length Arabidopsis cDNA collection.</title>
        <authorList>
            <person name="Seki M."/>
            <person name="Narusaka M."/>
            <person name="Kamiya A."/>
            <person name="Ishida J."/>
            <person name="Satou M."/>
            <person name="Sakurai T."/>
            <person name="Nakajima M."/>
            <person name="Enju A."/>
            <person name="Akiyama K."/>
            <person name="Oono Y."/>
            <person name="Muramatsu M."/>
            <person name="Hayashizaki Y."/>
            <person name="Kawai J."/>
            <person name="Carninci P."/>
            <person name="Itoh M."/>
            <person name="Ishii Y."/>
            <person name="Arakawa T."/>
            <person name="Shibata K."/>
            <person name="Shinagawa A."/>
            <person name="Shinozaki K."/>
        </authorList>
    </citation>
    <scope>NUCLEOTIDE SEQUENCE [LARGE SCALE MRNA] (ISOFORM 1)</scope>
    <source>
        <strain>cv. Columbia</strain>
    </source>
</reference>
<reference key="6">
    <citation type="journal article" date="2008" name="J. Biol. Chem.">
        <title>L-galactono-1,4-lactone dehydrogenase is required for the accumulation of plant respiratory complex I.</title>
        <authorList>
            <person name="Pineau B."/>
            <person name="Layoune O."/>
            <person name="Danon A."/>
            <person name="De Paepe R."/>
        </authorList>
    </citation>
    <scope>FUNCTION</scope>
    <scope>SUBCELLULAR LOCATION</scope>
    <scope>DISRUPTION PHENOTYPE</scope>
</reference>
<reference key="7">
    <citation type="journal article" date="2008" name="FEBS J.">
        <title>L-galactono-gamma-lactone dehydrogenase from Arabidopsis thaliana, a flavoprotein involved in vitamin C biosynthesis.</title>
        <authorList>
            <person name="Leferink N.G.H."/>
            <person name="van den Berg W.A.M."/>
            <person name="van Berkel W.J.H."/>
        </authorList>
    </citation>
    <scope>FUNCTION</scope>
    <scope>CATALYTIC ACTIVITY</scope>
    <scope>COFACTOR</scope>
    <scope>BIOPHYSICOCHEMICAL PROPERTIES</scope>
    <scope>MUTAGENESIS OF LEU-156</scope>
</reference>
<reference key="8">
    <citation type="journal article" date="2020" name="Nat. Commun.">
        <title>Specific features and assembly of the plant mitochondrial complex I revealed by cryo-EM.</title>
        <authorList>
            <person name="Soufari H."/>
            <person name="Parrot C."/>
            <person name="Kuhn L."/>
            <person name="Waltz F."/>
            <person name="Hashem Y."/>
        </authorList>
    </citation>
    <scope>STRUCTURE BY ELECTRON MICROSCOPY (3.80 ANGSTROMS) IN COMPLEX WITH THE MITOCHONDRIAL COMPLEX I</scope>
    <scope>FUNCTION</scope>
</reference>
<proteinExistence type="evidence at protein level"/>
<keyword id="KW-0002">3D-structure</keyword>
<keyword id="KW-0025">Alternative splicing</keyword>
<keyword id="KW-0472">Membrane</keyword>
<keyword id="KW-0496">Mitochondrion</keyword>
<keyword id="KW-0560">Oxidoreductase</keyword>
<keyword id="KW-1185">Reference proteome</keyword>
<keyword id="KW-0809">Transit peptide</keyword>
<keyword id="KW-0812">Transmembrane</keyword>
<keyword id="KW-1133">Transmembrane helix</keyword>
<accession>Q9SU56</accession>
<accession>B3H4I4</accession>
<accession>Q8GY16</accession>
<accession>Q9MAX4</accession>
<feature type="transit peptide" description="Mitochondrion" evidence="2">
    <location>
        <begin position="1"/>
        <end position="35"/>
    </location>
</feature>
<feature type="propeptide" id="PRO_0000372081" description="Removed in mature form" evidence="1">
    <location>
        <begin position="36"/>
        <end position="101"/>
    </location>
</feature>
<feature type="chain" id="PRO_0000372082" description="L-galactono-1,4-lactone dehydrogenase, mitochondrial">
    <location>
        <begin position="102"/>
        <end position="610"/>
    </location>
</feature>
<feature type="transmembrane region" description="Helical" evidence="2">
    <location>
        <begin position="68"/>
        <end position="84"/>
    </location>
</feature>
<feature type="domain" description="FAD-binding PCMH-type" evidence="3">
    <location>
        <begin position="123"/>
        <end position="258"/>
    </location>
</feature>
<feature type="region of interest" description="Disordered" evidence="4">
    <location>
        <begin position="17"/>
        <end position="61"/>
    </location>
</feature>
<feature type="compositionally biased region" description="Low complexity" evidence="4">
    <location>
        <begin position="19"/>
        <end position="30"/>
    </location>
</feature>
<feature type="compositionally biased region" description="Pro residues" evidence="4">
    <location>
        <begin position="43"/>
        <end position="58"/>
    </location>
</feature>
<feature type="splice variant" id="VSP_037137" description="In isoform 2." evidence="9">
    <original>KSPISPAFSTSEDDIFSWV</original>
    <variation>WYNHVPPDSRPSPEKGHHR</variation>
    <location>
        <begin position="494"/>
        <end position="512"/>
    </location>
</feature>
<feature type="splice variant" id="VSP_037138" description="In isoform 2." evidence="9">
    <location>
        <begin position="513"/>
        <end position="610"/>
    </location>
</feature>
<feature type="mutagenesis site" description="No covalent flavinylation, lower affinity for the substrate and lower activity." evidence="5">
    <original>L</original>
    <variation>A</variation>
    <variation>C</variation>
    <location>
        <position position="156"/>
    </location>
</feature>
<feature type="mutagenesis site" description="No covalent flavinylation." evidence="5">
    <original>L</original>
    <variation>F</variation>
    <location>
        <position position="156"/>
    </location>
</feature>
<feature type="mutagenesis site" description="No covalent flavinylation and no change of affinity for the substrate, but lower activity and decreased thermostability." evidence="5">
    <original>L</original>
    <variation>H</variation>
    <location>
        <position position="156"/>
    </location>
</feature>
<feature type="mutagenesis site" description="No covalent flavinylation and higher turnover rate of the substrate." evidence="5">
    <original>L</original>
    <variation>I</variation>
    <location>
        <position position="156"/>
    </location>
</feature>
<feature type="sequence conflict" description="In Ref. 1; BAA95212." evidence="9" ref="1">
    <original>D</original>
    <variation>G</variation>
    <location>
        <position position="346"/>
    </location>
</feature>
<feature type="sequence conflict" description="In Ref. 4; AAO64860 and 5; BAC42562." evidence="9" ref="4 5">
    <original>Q</original>
    <variation>H</variation>
    <location>
        <position position="525"/>
    </location>
</feature>
<comment type="function">
    <text evidence="5 6 7">Involved in the biosynthesis of ascorbate (PubMed:18190525). Catalyzes the final step of ascorbate biosynthesis (PubMed:18190525). Uses L-galactono-1,4-lactone and L-gulono-1,4-lactone as substrates, but not D-galactono-1,4-lactone, D-gulono-1,4-lactone, L-mannono-1,4-lactone or D-galactonic acid (PubMed:18190525). Also active with phenazine methosulfate and 1,4-benzoquinone as electron acceptors (PubMed:18190525). Involved in the regulation of the accumulation of the mitochondrial respiratory complex I (PubMed:18799460, PubMed:33060577). Structural part of one of the plant-specific mitochondrial complex I assembly intermediates, lacking the whole distal (PD) module (PubMed:33060577). Prevents the binding of the plant specific P1 protein (CPN60/HSP60), responsible for the linkage of the proximal (PP) to the distal (PD) module (PubMed:33060577).</text>
</comment>
<comment type="catalytic activity">
    <reaction evidence="5">
        <text>L-galactono-1,4-lactone + 4 Fe(III)-[cytochrome c] = L-dehydroascorbate + 4 Fe(II)-[cytochrome c] + 5 H(+)</text>
        <dbReference type="Rhea" id="RHEA:32367"/>
        <dbReference type="Rhea" id="RHEA-COMP:10350"/>
        <dbReference type="Rhea" id="RHEA-COMP:14399"/>
        <dbReference type="ChEBI" id="CHEBI:15378"/>
        <dbReference type="ChEBI" id="CHEBI:17464"/>
        <dbReference type="ChEBI" id="CHEBI:29033"/>
        <dbReference type="ChEBI" id="CHEBI:29034"/>
        <dbReference type="ChEBI" id="CHEBI:58539"/>
        <dbReference type="EC" id="1.3.2.3"/>
    </reaction>
    <physiologicalReaction direction="left-to-right" evidence="5">
        <dbReference type="Rhea" id="RHEA:32368"/>
    </physiologicalReaction>
</comment>
<comment type="catalytic activity">
    <reaction evidence="5">
        <text>L-gulono-1,4-lactone + 2 Fe(III)-[cytochrome c] = L-ascorbate + 2 Fe(II)-[cytochrome c] + 3 H(+)</text>
        <dbReference type="Rhea" id="RHEA:47248"/>
        <dbReference type="Rhea" id="RHEA-COMP:10350"/>
        <dbReference type="Rhea" id="RHEA-COMP:14399"/>
        <dbReference type="ChEBI" id="CHEBI:15378"/>
        <dbReference type="ChEBI" id="CHEBI:17587"/>
        <dbReference type="ChEBI" id="CHEBI:29033"/>
        <dbReference type="ChEBI" id="CHEBI:29034"/>
        <dbReference type="ChEBI" id="CHEBI:38290"/>
    </reaction>
    <physiologicalReaction direction="left-to-right" evidence="5">
        <dbReference type="Rhea" id="RHEA:47249"/>
    </physiologicalReaction>
</comment>
<comment type="cofactor">
    <cofactor evidence="5">
        <name>FAD</name>
        <dbReference type="ChEBI" id="CHEBI:57692"/>
    </cofactor>
    <text evidence="5">Binds FAD non-covalently.</text>
</comment>
<comment type="biophysicochemical properties">
    <kinetics>
        <KM evidence="5">0.17 mM for L-galactono-1,4-lactone</KM>
        <KM evidence="5">13.1 mM for L-gulono-1,4-lactone as substrate</KM>
        <KM evidence="5">0.034 mM for cytochrome C as electron acceptor</KM>
        <KM evidence="5">0.026 mM for phenazine methosulfate as electron acceptor</KM>
        <KM evidence="5">0.28 mM for 1,4-benzoquinone as electron acceptor</KM>
    </kinetics>
    <phDependence>
        <text evidence="5">Optimum pH is 8.8.</text>
    </phDependence>
</comment>
<comment type="pathway">
    <text evidence="9">Cofactor biosynthesis; L-ascorbate biosynthesis.</text>
</comment>
<comment type="subcellular location">
    <subcellularLocation>
        <location evidence="6">Mitochondrion membrane</location>
        <topology evidence="2">Single-pass membrane protein</topology>
    </subcellularLocation>
</comment>
<comment type="alternative products">
    <event type="alternative splicing"/>
    <isoform>
        <id>Q9SU56-1</id>
        <name>1</name>
        <sequence type="displayed"/>
    </isoform>
    <isoform>
        <id>Q9SU56-2</id>
        <name>2</name>
        <sequence type="described" ref="VSP_037137 VSP_037138"/>
    </isoform>
</comment>
<comment type="disruption phenotype">
    <text evidence="6">Delayed germination, chlorotic cotyledons and death at the cotyledon stage.</text>
</comment>